<accession>P51016</accession>
<name>HOA_PSEUF</name>
<keyword id="KW-0002">3D-structure</keyword>
<keyword id="KW-0058">Aromatic hydrocarbons catabolism</keyword>
<keyword id="KW-0903">Direct protein sequencing</keyword>
<keyword id="KW-0456">Lyase</keyword>
<keyword id="KW-0464">Manganese</keyword>
<keyword id="KW-0479">Metal-binding</keyword>
<keyword id="KW-0614">Plasmid</keyword>
<feature type="initiator methionine" description="Removed" evidence="4">
    <location>
        <position position="1"/>
    </location>
</feature>
<feature type="chain" id="PRO_0000079938" description="4-hydroxy-2-oxovalerate aldolase">
    <location>
        <begin position="2"/>
        <end position="345"/>
    </location>
</feature>
<feature type="domain" description="Pyruvate carboxyltransferase" evidence="1">
    <location>
        <begin position="9"/>
        <end position="261"/>
    </location>
</feature>
<feature type="active site" description="Proton acceptor" evidence="1">
    <location>
        <position position="21"/>
    </location>
</feature>
<feature type="binding site" evidence="1">
    <location>
        <begin position="17"/>
        <end position="18"/>
    </location>
    <ligand>
        <name>substrate</name>
    </ligand>
</feature>
<feature type="binding site" evidence="1 2">
    <location>
        <position position="18"/>
    </location>
    <ligand>
        <name>Mn(2+)</name>
        <dbReference type="ChEBI" id="CHEBI:29035"/>
    </ligand>
</feature>
<feature type="binding site" evidence="1">
    <location>
        <position position="171"/>
    </location>
    <ligand>
        <name>substrate</name>
    </ligand>
</feature>
<feature type="binding site" evidence="1 2">
    <location>
        <position position="200"/>
    </location>
    <ligand>
        <name>Mn(2+)</name>
        <dbReference type="ChEBI" id="CHEBI:29035"/>
    </ligand>
</feature>
<feature type="binding site" evidence="1">
    <location>
        <position position="200"/>
    </location>
    <ligand>
        <name>substrate</name>
    </ligand>
</feature>
<feature type="binding site" evidence="1 2">
    <location>
        <position position="202"/>
    </location>
    <ligand>
        <name>Mn(2+)</name>
        <dbReference type="ChEBI" id="CHEBI:29035"/>
    </ligand>
</feature>
<feature type="binding site" evidence="1">
    <location>
        <position position="291"/>
    </location>
    <ligand>
        <name>substrate</name>
    </ligand>
</feature>
<feature type="site" description="Transition state stabilizer" evidence="1">
    <location>
        <position position="17"/>
    </location>
</feature>
<feature type="strand" evidence="5">
    <location>
        <begin position="10"/>
        <end position="13"/>
    </location>
</feature>
<feature type="turn" evidence="5">
    <location>
        <begin position="15"/>
        <end position="17"/>
    </location>
</feature>
<feature type="helix" evidence="5">
    <location>
        <begin position="18"/>
        <end position="22"/>
    </location>
</feature>
<feature type="turn" evidence="5">
    <location>
        <begin position="23"/>
        <end position="25"/>
    </location>
</feature>
<feature type="helix" evidence="5">
    <location>
        <begin position="29"/>
        <end position="42"/>
    </location>
</feature>
<feature type="strand" evidence="5">
    <location>
        <begin position="45"/>
        <end position="48"/>
    </location>
</feature>
<feature type="turn" evidence="5">
    <location>
        <begin position="60"/>
        <end position="62"/>
    </location>
</feature>
<feature type="helix" evidence="5">
    <location>
        <begin position="69"/>
        <end position="77"/>
    </location>
</feature>
<feature type="strand" evidence="5">
    <location>
        <begin position="81"/>
        <end position="89"/>
    </location>
</feature>
<feature type="helix" evidence="5">
    <location>
        <begin position="96"/>
        <end position="105"/>
    </location>
</feature>
<feature type="strand" evidence="5">
    <location>
        <begin position="109"/>
        <end position="115"/>
    </location>
</feature>
<feature type="helix" evidence="5">
    <location>
        <begin position="119"/>
        <end position="122"/>
    </location>
</feature>
<feature type="helix" evidence="5">
    <location>
        <begin position="123"/>
        <end position="132"/>
    </location>
</feature>
<feature type="strand" evidence="5">
    <location>
        <begin position="135"/>
        <end position="142"/>
    </location>
</feature>
<feature type="helix" evidence="5">
    <location>
        <begin position="148"/>
        <end position="161"/>
    </location>
</feature>
<feature type="strand" evidence="5">
    <location>
        <begin position="164"/>
        <end position="169"/>
    </location>
</feature>
<feature type="helix" evidence="5">
    <location>
        <begin position="177"/>
        <end position="190"/>
    </location>
</feature>
<feature type="strand" evidence="5">
    <location>
        <begin position="195"/>
        <end position="200"/>
    </location>
</feature>
<feature type="helix" evidence="5">
    <location>
        <begin position="208"/>
        <end position="217"/>
    </location>
</feature>
<feature type="strand" evidence="5">
    <location>
        <begin position="222"/>
        <end position="226"/>
    </location>
</feature>
<feature type="helix" evidence="5">
    <location>
        <begin position="227"/>
        <end position="229"/>
    </location>
</feature>
<feature type="helix" evidence="5">
    <location>
        <begin position="239"/>
        <end position="249"/>
    </location>
</feature>
<feature type="helix" evidence="5">
    <location>
        <begin position="257"/>
        <end position="266"/>
    </location>
</feature>
<feature type="helix" evidence="5">
    <location>
        <begin position="269"/>
        <end position="271"/>
    </location>
</feature>
<feature type="helix" evidence="5">
    <location>
        <begin position="280"/>
        <end position="288"/>
    </location>
</feature>
<feature type="helix" evidence="5">
    <location>
        <begin position="294"/>
        <end position="305"/>
    </location>
</feature>
<feature type="helix" evidence="5">
    <location>
        <begin position="309"/>
        <end position="319"/>
    </location>
</feature>
<feature type="helix" evidence="5">
    <location>
        <begin position="327"/>
        <end position="340"/>
    </location>
</feature>
<comment type="function">
    <text evidence="3">Catalyzes the retro-aldol cleavage of 4-hydroxy-2-oxopentanoate to pyruvate and acetaldehyde. Is involved in the meta-cleavage pathway for the degradation of aromatic compounds such as phenols, cresols and catechols.</text>
</comment>
<comment type="catalytic activity">
    <reaction evidence="1 4">
        <text>(S)-4-hydroxy-2-oxopentanoate = acetaldehyde + pyruvate</text>
        <dbReference type="Rhea" id="RHEA:22624"/>
        <dbReference type="ChEBI" id="CHEBI:15343"/>
        <dbReference type="ChEBI" id="CHEBI:15361"/>
        <dbReference type="ChEBI" id="CHEBI:73143"/>
        <dbReference type="EC" id="4.1.3.39"/>
    </reaction>
</comment>
<comment type="activity regulation">
    <text evidence="4">Six- to eight-fold activated by Mn(2+). Retains residual activity after EDTA treatment in vitro. Also activated by NADH and, to a lesser extent, by NAD(+). Strongly inhibited by Zn(2+). Mg(2+) and Ca(2+) have no effect on enzymatic activity.</text>
</comment>
<comment type="biophysicochemical properties">
    <phDependence>
        <text evidence="4">Optimum pH is 8.5-9.0.</text>
    </phDependence>
</comment>
<comment type="pathway">
    <text>Aromatic compound metabolism; benzoate degradation via hydroxylation.</text>
</comment>
<comment type="pathway">
    <text>Aromatic compound metabolism; phenol degradation.</text>
</comment>
<comment type="subunit">
    <text evidence="2 4">Heterotetramer composed of two DmpG (aldolase) and two DmpF (dehydrogenase) subunits, which allows a direct channeling of acetaldehyde between the two active sites.</text>
</comment>
<comment type="similarity">
    <text evidence="1">Belongs to the 4-hydroxy-2-oxovalerate aldolase family.</text>
</comment>
<geneLocation type="plasmid">
    <name>pVI150</name>
</geneLocation>
<dbReference type="EC" id="4.1.3.39" evidence="1"/>
<dbReference type="EMBL" id="X60835">
    <property type="protein sequence ID" value="CAA43227.1"/>
    <property type="molecule type" value="Genomic_DNA"/>
</dbReference>
<dbReference type="PDB" id="1NVM">
    <property type="method" value="X-ray"/>
    <property type="resolution" value="1.70 A"/>
    <property type="chains" value="A/C/E/G=1-345"/>
</dbReference>
<dbReference type="PDBsum" id="1NVM"/>
<dbReference type="SMR" id="P51016"/>
<dbReference type="IntAct" id="P51016">
    <property type="interactions" value="1"/>
</dbReference>
<dbReference type="KEGG" id="ag:CAA43227"/>
<dbReference type="BioCyc" id="MetaCyc:MONOMER-12778"/>
<dbReference type="BRENDA" id="4.1.3.39">
    <property type="organism ID" value="5085"/>
</dbReference>
<dbReference type="UniPathway" id="UPA00156"/>
<dbReference type="UniPathway" id="UPA00728"/>
<dbReference type="EvolutionaryTrace" id="P51016"/>
<dbReference type="GO" id="GO:0003852">
    <property type="term" value="F:2-isopropylmalate synthase activity"/>
    <property type="evidence" value="ECO:0007669"/>
    <property type="project" value="TreeGrafter"/>
</dbReference>
<dbReference type="GO" id="GO:0008701">
    <property type="term" value="F:4-hydroxy-2-oxovalerate aldolase activity"/>
    <property type="evidence" value="ECO:0000314"/>
    <property type="project" value="UniProtKB"/>
</dbReference>
<dbReference type="GO" id="GO:0030145">
    <property type="term" value="F:manganese ion binding"/>
    <property type="evidence" value="ECO:0000314"/>
    <property type="project" value="UniProtKB"/>
</dbReference>
<dbReference type="GO" id="GO:0043640">
    <property type="term" value="P:benzoate catabolic process via hydroxylation"/>
    <property type="evidence" value="ECO:0007669"/>
    <property type="project" value="UniProtKB-UniPathway"/>
</dbReference>
<dbReference type="GO" id="GO:0009098">
    <property type="term" value="P:L-leucine biosynthetic process"/>
    <property type="evidence" value="ECO:0007669"/>
    <property type="project" value="TreeGrafter"/>
</dbReference>
<dbReference type="GO" id="GO:0019336">
    <property type="term" value="P:phenol-containing compound catabolic process"/>
    <property type="evidence" value="ECO:0007669"/>
    <property type="project" value="UniProtKB-UniPathway"/>
</dbReference>
<dbReference type="CDD" id="cd07943">
    <property type="entry name" value="DRE_TIM_HOA"/>
    <property type="match status" value="1"/>
</dbReference>
<dbReference type="FunFam" id="1.10.8.60:FF:000042">
    <property type="entry name" value="4-hydroxy-2-oxovalerate aldolase"/>
    <property type="match status" value="1"/>
</dbReference>
<dbReference type="FunFam" id="3.20.20.70:FF:000072">
    <property type="entry name" value="4-hydroxy-2-oxovalerate aldolase"/>
    <property type="match status" value="1"/>
</dbReference>
<dbReference type="Gene3D" id="1.10.8.60">
    <property type="match status" value="1"/>
</dbReference>
<dbReference type="Gene3D" id="3.20.20.70">
    <property type="entry name" value="Aldolase class I"/>
    <property type="match status" value="1"/>
</dbReference>
<dbReference type="HAMAP" id="MF_01656">
    <property type="entry name" value="HOA"/>
    <property type="match status" value="1"/>
</dbReference>
<dbReference type="InterPro" id="IPR050073">
    <property type="entry name" value="2-IPM_HCS-like"/>
</dbReference>
<dbReference type="InterPro" id="IPR017629">
    <property type="entry name" value="4OH_2_O-val_aldolase"/>
</dbReference>
<dbReference type="InterPro" id="IPR013785">
    <property type="entry name" value="Aldolase_TIM"/>
</dbReference>
<dbReference type="InterPro" id="IPR012425">
    <property type="entry name" value="DmpG_comm"/>
</dbReference>
<dbReference type="InterPro" id="IPR035685">
    <property type="entry name" value="DRE_TIM_HOA"/>
</dbReference>
<dbReference type="InterPro" id="IPR000891">
    <property type="entry name" value="PYR_CT"/>
</dbReference>
<dbReference type="NCBIfam" id="TIGR03217">
    <property type="entry name" value="4OH_2_O_val_ald"/>
    <property type="match status" value="1"/>
</dbReference>
<dbReference type="NCBIfam" id="NF006049">
    <property type="entry name" value="PRK08195.1"/>
    <property type="match status" value="1"/>
</dbReference>
<dbReference type="PANTHER" id="PTHR10277:SF9">
    <property type="entry name" value="2-ISOPROPYLMALATE SYNTHASE 1, CHLOROPLASTIC-RELATED"/>
    <property type="match status" value="1"/>
</dbReference>
<dbReference type="PANTHER" id="PTHR10277">
    <property type="entry name" value="HOMOCITRATE SYNTHASE-RELATED"/>
    <property type="match status" value="1"/>
</dbReference>
<dbReference type="Pfam" id="PF07836">
    <property type="entry name" value="DmpG_comm"/>
    <property type="match status" value="1"/>
</dbReference>
<dbReference type="Pfam" id="PF00682">
    <property type="entry name" value="HMGL-like"/>
    <property type="match status" value="1"/>
</dbReference>
<dbReference type="SUPFAM" id="SSF51569">
    <property type="entry name" value="Aldolase"/>
    <property type="match status" value="1"/>
</dbReference>
<dbReference type="SUPFAM" id="SSF89000">
    <property type="entry name" value="post-HMGL domain-like"/>
    <property type="match status" value="1"/>
</dbReference>
<dbReference type="PROSITE" id="PS50991">
    <property type="entry name" value="PYR_CT"/>
    <property type="match status" value="1"/>
</dbReference>
<proteinExistence type="evidence at protein level"/>
<sequence length="345" mass="37471">MTFNPSKKLYISDVTLRDGSHAIRHQYTLDDVRAIARALDKAKVDSIEVAHGDGLQGSSFNYGFGRHTDLEYIEAVAGEISHAQIATLLLPGIGSVHDLKNAYQAGARVVRVATHCTEADVSKQHIEYARNLGMDTVGFLMMSHMIPAEKLAEQGKLMESYGATCIYMADSGGAMSMNDIRDRMRAFKAVLKPETQVGMHAHHNLSLGVANSIVAVEEGCDRVDASLAGMGAGAGNAPLEVFIAVAERLGWNHGTDLYTLMDAADDIVRPLQDRPVRVDRETLGLGYAGVYSSFLRHAEIAAAKYNLKTLDILVELGHRRMVGGQEDMIVDVALDLLAAHKENRA</sequence>
<reference key="1">
    <citation type="journal article" date="1992" name="J. Bacteriol.">
        <title>Nucleotide sequence and functional analysis of the complete phenol/3,4-dimethylphenol catabolic pathway of Pseudomonas sp. strain CF600.</title>
        <authorList>
            <person name="Shingler V."/>
            <person name="Marklund U."/>
            <person name="Powlowski J."/>
        </authorList>
    </citation>
    <scope>NUCLEOTIDE SEQUENCE [GENOMIC DNA]</scope>
    <scope>FUNCTION</scope>
    <source>
        <strain>CF600</strain>
    </source>
</reference>
<reference key="2">
    <citation type="journal article" date="1993" name="J. Bacteriol.">
        <title>Purification and properties of the physically associated meta-cleavage pathway enzymes 4-hydroxy-2-ketovalerate aldolase and aldehyde dehydrogenase (acylating) from Pseudomonas sp. strain CF600.</title>
        <authorList>
            <person name="Powlowski J."/>
            <person name="Sahlman L."/>
            <person name="Shingler V."/>
        </authorList>
    </citation>
    <scope>PROTEIN SEQUENCE OF 2-7</scope>
    <scope>CATALYTIC ACTIVITY</scope>
    <scope>SUBSTRATE SPECIFICITY</scope>
    <scope>ACTIVITY REGULATION</scope>
    <scope>SUBUNIT</scope>
    <scope>INTERACTION WITH DMPF</scope>
    <scope>PH DEPENDENCE</scope>
    <source>
        <strain>CF600</strain>
    </source>
</reference>
<reference key="3">
    <citation type="journal article" date="2003" name="Proc. Natl. Acad. Sci. U.S.A.">
        <title>Crystal structure of a bifunctional aldolase-dehydrogenase: sequestering a reactive and volatile intermediate.</title>
        <authorList>
            <person name="Manjasetty B.A."/>
            <person name="Powlowski J."/>
            <person name="Vrielink A."/>
        </authorList>
    </citation>
    <scope>X-RAY CRYSTALLOGRAPHY (1.7 ANGSTROMS) IN COMPLEX WITH DMPF; NAD; MANGANESE AND OXALATE</scope>
    <scope>SUBUNIT</scope>
    <scope>REACTION MECHANISM</scope>
    <source>
        <strain>CF600</strain>
    </source>
</reference>
<gene>
    <name type="primary">dmpG</name>
</gene>
<evidence type="ECO:0000255" key="1">
    <source>
        <dbReference type="HAMAP-Rule" id="MF_01656"/>
    </source>
</evidence>
<evidence type="ECO:0000269" key="2">
    <source>
    </source>
</evidence>
<evidence type="ECO:0000269" key="3">
    <source>
    </source>
</evidence>
<evidence type="ECO:0000269" key="4">
    <source>
    </source>
</evidence>
<evidence type="ECO:0007829" key="5">
    <source>
        <dbReference type="PDB" id="1NVM"/>
    </source>
</evidence>
<protein>
    <recommendedName>
        <fullName evidence="1">4-hydroxy-2-oxovalerate aldolase</fullName>
        <shortName evidence="1">HOA</shortName>
        <ecNumber evidence="1">4.1.3.39</ecNumber>
    </recommendedName>
    <alternativeName>
        <fullName evidence="1">4-hydroxy-2-keto-pentanoic acid aldolase</fullName>
    </alternativeName>
    <alternativeName>
        <fullName evidence="1">4-hydroxy-2-oxopentanoate aldolase</fullName>
    </alternativeName>
</protein>
<organism>
    <name type="scientific">Pseudomonas sp. (strain CF600)</name>
    <dbReference type="NCBI Taxonomy" id="79676"/>
    <lineage>
        <taxon>Bacteria</taxon>
        <taxon>Pseudomonadati</taxon>
        <taxon>Pseudomonadota</taxon>
    </lineage>
</organism>